<dbReference type="EMBL" id="CP001138">
    <property type="protein sequence ID" value="ACH48824.1"/>
    <property type="molecule type" value="Genomic_DNA"/>
</dbReference>
<dbReference type="RefSeq" id="WP_000028952.1">
    <property type="nucleotide sequence ID" value="NC_011149.1"/>
</dbReference>
<dbReference type="SMR" id="B5F1B8"/>
<dbReference type="GeneID" id="66756972"/>
<dbReference type="KEGG" id="sea:SeAg_B2696"/>
<dbReference type="HOGENOM" id="CLU_069054_5_1_6"/>
<dbReference type="Proteomes" id="UP000008819">
    <property type="component" value="Chromosome"/>
</dbReference>
<dbReference type="GO" id="GO:0005829">
    <property type="term" value="C:cytosol"/>
    <property type="evidence" value="ECO:0007669"/>
    <property type="project" value="TreeGrafter"/>
</dbReference>
<dbReference type="GO" id="GO:0051537">
    <property type="term" value="F:2 iron, 2 sulfur cluster binding"/>
    <property type="evidence" value="ECO:0007669"/>
    <property type="project" value="TreeGrafter"/>
</dbReference>
<dbReference type="GO" id="GO:0005506">
    <property type="term" value="F:iron ion binding"/>
    <property type="evidence" value="ECO:0007669"/>
    <property type="project" value="UniProtKB-UniRule"/>
</dbReference>
<dbReference type="GO" id="GO:0016226">
    <property type="term" value="P:iron-sulfur cluster assembly"/>
    <property type="evidence" value="ECO:0007669"/>
    <property type="project" value="UniProtKB-UniRule"/>
</dbReference>
<dbReference type="FunFam" id="2.60.300.12:FF:000001">
    <property type="entry name" value="Iron-binding protein IscA"/>
    <property type="match status" value="1"/>
</dbReference>
<dbReference type="Gene3D" id="2.60.300.12">
    <property type="entry name" value="HesB-like domain"/>
    <property type="match status" value="1"/>
</dbReference>
<dbReference type="HAMAP" id="MF_01429">
    <property type="entry name" value="Fe_S_insert_IscA"/>
    <property type="match status" value="1"/>
</dbReference>
<dbReference type="InterPro" id="IPR050322">
    <property type="entry name" value="Fe-S_cluster_asmbl/transfer"/>
</dbReference>
<dbReference type="InterPro" id="IPR000361">
    <property type="entry name" value="FeS_biogenesis"/>
</dbReference>
<dbReference type="InterPro" id="IPR016092">
    <property type="entry name" value="FeS_cluster_insertion"/>
</dbReference>
<dbReference type="InterPro" id="IPR017870">
    <property type="entry name" value="FeS_cluster_insertion_CS"/>
</dbReference>
<dbReference type="InterPro" id="IPR035903">
    <property type="entry name" value="HesB-like_dom_sf"/>
</dbReference>
<dbReference type="InterPro" id="IPR011302">
    <property type="entry name" value="IscA_proteobacteria"/>
</dbReference>
<dbReference type="NCBIfam" id="TIGR00049">
    <property type="entry name" value="iron-sulfur cluster assembly accessory protein"/>
    <property type="match status" value="1"/>
</dbReference>
<dbReference type="NCBIfam" id="TIGR02011">
    <property type="entry name" value="IscA"/>
    <property type="match status" value="1"/>
</dbReference>
<dbReference type="NCBIfam" id="NF007049">
    <property type="entry name" value="PRK09502.1"/>
    <property type="match status" value="1"/>
</dbReference>
<dbReference type="PANTHER" id="PTHR10072:SF41">
    <property type="entry name" value="IRON-SULFUR CLUSTER ASSEMBLY 1 HOMOLOG, MITOCHONDRIAL"/>
    <property type="match status" value="1"/>
</dbReference>
<dbReference type="PANTHER" id="PTHR10072">
    <property type="entry name" value="IRON-SULFUR CLUSTER ASSEMBLY PROTEIN"/>
    <property type="match status" value="1"/>
</dbReference>
<dbReference type="Pfam" id="PF01521">
    <property type="entry name" value="Fe-S_biosyn"/>
    <property type="match status" value="1"/>
</dbReference>
<dbReference type="SUPFAM" id="SSF89360">
    <property type="entry name" value="HesB-like domain"/>
    <property type="match status" value="1"/>
</dbReference>
<dbReference type="PROSITE" id="PS01152">
    <property type="entry name" value="HESB"/>
    <property type="match status" value="1"/>
</dbReference>
<accession>B5F1B8</accession>
<protein>
    <recommendedName>
        <fullName evidence="1">Iron-binding protein IscA</fullName>
    </recommendedName>
    <alternativeName>
        <fullName evidence="1">Iron-sulfur cluster assembly protein</fullName>
    </alternativeName>
</protein>
<comment type="function">
    <text evidence="1">Is able to transfer iron-sulfur clusters to apo-ferredoxin. Multiple cycles of [2Fe2S] cluster formation and transfer are observed, suggesting that IscA acts catalytically. Recruits intracellular free iron so as to provide iron for the assembly of transient iron-sulfur cluster in IscU in the presence of IscS, L-cysteine and the thioredoxin reductase system TrxA/TrxB.</text>
</comment>
<comment type="cofactor">
    <cofactor evidence="1">
        <name>Fe cation</name>
        <dbReference type="ChEBI" id="CHEBI:24875"/>
    </cofactor>
    <text evidence="1">Binds 2 iron ions per dimer. The dimer may bind additional iron ions.</text>
</comment>
<comment type="subunit">
    <text evidence="1">Homodimer; may form tetramers and higher multimers.</text>
</comment>
<comment type="similarity">
    <text evidence="1">Belongs to the HesB/IscA family.</text>
</comment>
<gene>
    <name evidence="1" type="primary">iscA</name>
    <name type="ordered locus">SeAg_B2696</name>
</gene>
<reference key="1">
    <citation type="journal article" date="2011" name="J. Bacteriol.">
        <title>Comparative genomics of 28 Salmonella enterica isolates: evidence for CRISPR-mediated adaptive sublineage evolution.</title>
        <authorList>
            <person name="Fricke W.F."/>
            <person name="Mammel M.K."/>
            <person name="McDermott P.F."/>
            <person name="Tartera C."/>
            <person name="White D.G."/>
            <person name="Leclerc J.E."/>
            <person name="Ravel J."/>
            <person name="Cebula T.A."/>
        </authorList>
    </citation>
    <scope>NUCLEOTIDE SEQUENCE [LARGE SCALE GENOMIC DNA]</scope>
    <source>
        <strain>SL483</strain>
    </source>
</reference>
<organism>
    <name type="scientific">Salmonella agona (strain SL483)</name>
    <dbReference type="NCBI Taxonomy" id="454166"/>
    <lineage>
        <taxon>Bacteria</taxon>
        <taxon>Pseudomonadati</taxon>
        <taxon>Pseudomonadota</taxon>
        <taxon>Gammaproteobacteria</taxon>
        <taxon>Enterobacterales</taxon>
        <taxon>Enterobacteriaceae</taxon>
        <taxon>Salmonella</taxon>
    </lineage>
</organism>
<feature type="chain" id="PRO_1000145759" description="Iron-binding protein IscA">
    <location>
        <begin position="1"/>
        <end position="107"/>
    </location>
</feature>
<feature type="binding site" evidence="1">
    <location>
        <position position="35"/>
    </location>
    <ligand>
        <name>Fe cation</name>
        <dbReference type="ChEBI" id="CHEBI:24875"/>
    </ligand>
</feature>
<feature type="binding site" evidence="1">
    <location>
        <position position="99"/>
    </location>
    <ligand>
        <name>Fe cation</name>
        <dbReference type="ChEBI" id="CHEBI:24875"/>
    </ligand>
</feature>
<feature type="binding site" evidence="1">
    <location>
        <position position="101"/>
    </location>
    <ligand>
        <name>Fe cation</name>
        <dbReference type="ChEBI" id="CHEBI:24875"/>
    </ligand>
</feature>
<name>ISCA_SALA4</name>
<keyword id="KW-0408">Iron</keyword>
<keyword id="KW-0479">Metal-binding</keyword>
<evidence type="ECO:0000255" key="1">
    <source>
        <dbReference type="HAMAP-Rule" id="MF_01429"/>
    </source>
</evidence>
<proteinExistence type="inferred from homology"/>
<sequence length="107" mass="11504">MSITLSDSAAARVNTFLANRGKGFGLRLGVRTSGCSGMAYVLEFVDEPTAEDTVFEDKGVKVVVDGKSLQFLDGTQLDFVKEGLNEGFKFSNPNVKDECGCGESFHV</sequence>